<evidence type="ECO:0000255" key="1">
    <source>
        <dbReference type="HAMAP-Rule" id="MF_00040"/>
    </source>
</evidence>
<dbReference type="EMBL" id="CP001124">
    <property type="protein sequence ID" value="ACH39757.1"/>
    <property type="molecule type" value="Genomic_DNA"/>
</dbReference>
<dbReference type="RefSeq" id="WP_012531183.1">
    <property type="nucleotide sequence ID" value="NC_011146.1"/>
</dbReference>
<dbReference type="SMR" id="B5EHV8"/>
<dbReference type="STRING" id="404380.Gbem_2753"/>
<dbReference type="KEGG" id="gbm:Gbem_2753"/>
<dbReference type="eggNOG" id="COG0233">
    <property type="taxonomic scope" value="Bacteria"/>
</dbReference>
<dbReference type="HOGENOM" id="CLU_073981_2_0_7"/>
<dbReference type="OrthoDB" id="9804006at2"/>
<dbReference type="Proteomes" id="UP000008825">
    <property type="component" value="Chromosome"/>
</dbReference>
<dbReference type="GO" id="GO:0005829">
    <property type="term" value="C:cytosol"/>
    <property type="evidence" value="ECO:0007669"/>
    <property type="project" value="GOC"/>
</dbReference>
<dbReference type="GO" id="GO:0043023">
    <property type="term" value="F:ribosomal large subunit binding"/>
    <property type="evidence" value="ECO:0007669"/>
    <property type="project" value="TreeGrafter"/>
</dbReference>
<dbReference type="GO" id="GO:0002184">
    <property type="term" value="P:cytoplasmic translational termination"/>
    <property type="evidence" value="ECO:0007669"/>
    <property type="project" value="TreeGrafter"/>
</dbReference>
<dbReference type="CDD" id="cd00520">
    <property type="entry name" value="RRF"/>
    <property type="match status" value="1"/>
</dbReference>
<dbReference type="FunFam" id="1.10.132.20:FF:000001">
    <property type="entry name" value="Ribosome-recycling factor"/>
    <property type="match status" value="1"/>
</dbReference>
<dbReference type="FunFam" id="3.30.1360.40:FF:000001">
    <property type="entry name" value="Ribosome-recycling factor"/>
    <property type="match status" value="1"/>
</dbReference>
<dbReference type="Gene3D" id="3.30.1360.40">
    <property type="match status" value="1"/>
</dbReference>
<dbReference type="Gene3D" id="1.10.132.20">
    <property type="entry name" value="Ribosome-recycling factor"/>
    <property type="match status" value="1"/>
</dbReference>
<dbReference type="HAMAP" id="MF_00040">
    <property type="entry name" value="RRF"/>
    <property type="match status" value="1"/>
</dbReference>
<dbReference type="InterPro" id="IPR002661">
    <property type="entry name" value="Ribosome_recyc_fac"/>
</dbReference>
<dbReference type="InterPro" id="IPR023584">
    <property type="entry name" value="Ribosome_recyc_fac_dom"/>
</dbReference>
<dbReference type="InterPro" id="IPR036191">
    <property type="entry name" value="RRF_sf"/>
</dbReference>
<dbReference type="NCBIfam" id="TIGR00496">
    <property type="entry name" value="frr"/>
    <property type="match status" value="1"/>
</dbReference>
<dbReference type="PANTHER" id="PTHR20982:SF3">
    <property type="entry name" value="MITOCHONDRIAL RIBOSOME RECYCLING FACTOR PSEUDO 1"/>
    <property type="match status" value="1"/>
</dbReference>
<dbReference type="PANTHER" id="PTHR20982">
    <property type="entry name" value="RIBOSOME RECYCLING FACTOR"/>
    <property type="match status" value="1"/>
</dbReference>
<dbReference type="Pfam" id="PF01765">
    <property type="entry name" value="RRF"/>
    <property type="match status" value="1"/>
</dbReference>
<dbReference type="SUPFAM" id="SSF55194">
    <property type="entry name" value="Ribosome recycling factor, RRF"/>
    <property type="match status" value="1"/>
</dbReference>
<gene>
    <name evidence="1" type="primary">frr</name>
    <name type="ordered locus">Gbem_2753</name>
</gene>
<reference key="1">
    <citation type="submission" date="2008-07" db="EMBL/GenBank/DDBJ databases">
        <title>Complete sequence of Geobacter bemidjiensis BEM.</title>
        <authorList>
            <consortium name="US DOE Joint Genome Institute"/>
            <person name="Lucas S."/>
            <person name="Copeland A."/>
            <person name="Lapidus A."/>
            <person name="Glavina del Rio T."/>
            <person name="Dalin E."/>
            <person name="Tice H."/>
            <person name="Bruce D."/>
            <person name="Goodwin L."/>
            <person name="Pitluck S."/>
            <person name="Kiss H."/>
            <person name="Brettin T."/>
            <person name="Detter J.C."/>
            <person name="Han C."/>
            <person name="Kuske C.R."/>
            <person name="Schmutz J."/>
            <person name="Larimer F."/>
            <person name="Land M."/>
            <person name="Hauser L."/>
            <person name="Kyrpides N."/>
            <person name="Lykidis A."/>
            <person name="Lovley D."/>
            <person name="Richardson P."/>
        </authorList>
    </citation>
    <scope>NUCLEOTIDE SEQUENCE [LARGE SCALE GENOMIC DNA]</scope>
    <source>
        <strain>ATCC BAA-1014 / DSM 16622 / JCM 12645 / Bem</strain>
    </source>
</reference>
<keyword id="KW-0963">Cytoplasm</keyword>
<keyword id="KW-0648">Protein biosynthesis</keyword>
<keyword id="KW-1185">Reference proteome</keyword>
<accession>B5EHV8</accession>
<sequence length="185" mass="21019">MVKDVISSMNVHMDKSIESLRKEYQKVRTGRASTSLLDDIKVDSYGTLSPLNQVATLAIPEARTITISPWDSKMIAPIEKAIMNSNLGLNPANDGKMIRLTLPPLTEERRKDIVKQLKRDAEDAKVALRNIRRDAIDQLKKLEKDKSISEDEQKRAEKEVQDFTNSHVAKVDEVLLHKEKEVMEV</sequence>
<organism>
    <name type="scientific">Citrifermentans bemidjiense (strain ATCC BAA-1014 / DSM 16622 / JCM 12645 / Bem)</name>
    <name type="common">Geobacter bemidjiensis</name>
    <dbReference type="NCBI Taxonomy" id="404380"/>
    <lineage>
        <taxon>Bacteria</taxon>
        <taxon>Pseudomonadati</taxon>
        <taxon>Thermodesulfobacteriota</taxon>
        <taxon>Desulfuromonadia</taxon>
        <taxon>Geobacterales</taxon>
        <taxon>Geobacteraceae</taxon>
        <taxon>Citrifermentans</taxon>
    </lineage>
</organism>
<proteinExistence type="inferred from homology"/>
<feature type="chain" id="PRO_1000090745" description="Ribosome-recycling factor">
    <location>
        <begin position="1"/>
        <end position="185"/>
    </location>
</feature>
<comment type="function">
    <text evidence="1">Responsible for the release of ribosomes from messenger RNA at the termination of protein biosynthesis. May increase the efficiency of translation by recycling ribosomes from one round of translation to another.</text>
</comment>
<comment type="subcellular location">
    <subcellularLocation>
        <location evidence="1">Cytoplasm</location>
    </subcellularLocation>
</comment>
<comment type="similarity">
    <text evidence="1">Belongs to the RRF family.</text>
</comment>
<name>RRF_CITBB</name>
<protein>
    <recommendedName>
        <fullName evidence="1">Ribosome-recycling factor</fullName>
        <shortName evidence="1">RRF</shortName>
    </recommendedName>
    <alternativeName>
        <fullName evidence="1">Ribosome-releasing factor</fullName>
    </alternativeName>
</protein>